<comment type="similarity">
    <text evidence="1">Belongs to the UPF0310 family.</text>
</comment>
<sequence>MTRFWIGVVSKEHVLRGVEGGFCQVCHGKKAPLNRMKKGDYLLYYSPKYQLNGQEKLQAFTAVGKILDDTAYQVEMFEGFVPFRRDVSYYQPVKDCPIEQVRQHPQWRQYASQIRYGHFEVSKDFFLYVFEQMKLDSPANQ</sequence>
<evidence type="ECO:0000255" key="1">
    <source>
        <dbReference type="HAMAP-Rule" id="MF_00771"/>
    </source>
</evidence>
<organism>
    <name type="scientific">Streptococcus sanguinis (strain SK36)</name>
    <dbReference type="NCBI Taxonomy" id="388919"/>
    <lineage>
        <taxon>Bacteria</taxon>
        <taxon>Bacillati</taxon>
        <taxon>Bacillota</taxon>
        <taxon>Bacilli</taxon>
        <taxon>Lactobacillales</taxon>
        <taxon>Streptococcaceae</taxon>
        <taxon>Streptococcus</taxon>
    </lineage>
</organism>
<name>Y254_STRSV</name>
<dbReference type="EMBL" id="CP000387">
    <property type="protein sequence ID" value="ABN43713.1"/>
    <property type="molecule type" value="Genomic_DNA"/>
</dbReference>
<dbReference type="RefSeq" id="WP_011836390.1">
    <property type="nucleotide sequence ID" value="NC_009009.1"/>
</dbReference>
<dbReference type="RefSeq" id="YP_001034263.1">
    <property type="nucleotide sequence ID" value="NC_009009.1"/>
</dbReference>
<dbReference type="SMR" id="A3CKK8"/>
<dbReference type="STRING" id="388919.SSA_0254"/>
<dbReference type="KEGG" id="ssa:SSA_0254"/>
<dbReference type="PATRIC" id="fig|388919.9.peg.246"/>
<dbReference type="eggNOG" id="COG1673">
    <property type="taxonomic scope" value="Bacteria"/>
</dbReference>
<dbReference type="HOGENOM" id="CLU_117727_0_0_9"/>
<dbReference type="OrthoDB" id="9793567at2"/>
<dbReference type="Proteomes" id="UP000002148">
    <property type="component" value="Chromosome"/>
</dbReference>
<dbReference type="CDD" id="cd21132">
    <property type="entry name" value="EVE-like"/>
    <property type="match status" value="1"/>
</dbReference>
<dbReference type="Gene3D" id="3.10.590.10">
    <property type="entry name" value="ph1033 like domains"/>
    <property type="match status" value="1"/>
</dbReference>
<dbReference type="HAMAP" id="MF_00771">
    <property type="entry name" value="UPF0310"/>
    <property type="match status" value="1"/>
</dbReference>
<dbReference type="InterPro" id="IPR002740">
    <property type="entry name" value="EVE_domain"/>
</dbReference>
<dbReference type="InterPro" id="IPR015947">
    <property type="entry name" value="PUA-like_sf"/>
</dbReference>
<dbReference type="InterPro" id="IPR022996">
    <property type="entry name" value="UPF0310"/>
</dbReference>
<dbReference type="NCBIfam" id="NF002616">
    <property type="entry name" value="PRK02268.1-2"/>
    <property type="match status" value="1"/>
</dbReference>
<dbReference type="NCBIfam" id="NF002617">
    <property type="entry name" value="PRK02268.1-3"/>
    <property type="match status" value="1"/>
</dbReference>
<dbReference type="Pfam" id="PF01878">
    <property type="entry name" value="EVE"/>
    <property type="match status" value="1"/>
</dbReference>
<dbReference type="SUPFAM" id="SSF88697">
    <property type="entry name" value="PUA domain-like"/>
    <property type="match status" value="1"/>
</dbReference>
<feature type="chain" id="PRO_1000017349" description="UPF0310 protein SSA_0254">
    <location>
        <begin position="1"/>
        <end position="141"/>
    </location>
</feature>
<keyword id="KW-1185">Reference proteome</keyword>
<protein>
    <recommendedName>
        <fullName evidence="1">UPF0310 protein SSA_0254</fullName>
    </recommendedName>
</protein>
<gene>
    <name type="ordered locus">SSA_0254</name>
</gene>
<accession>A3CKK8</accession>
<proteinExistence type="inferred from homology"/>
<reference key="1">
    <citation type="journal article" date="2007" name="J. Bacteriol.">
        <title>Genome of the opportunistic pathogen Streptococcus sanguinis.</title>
        <authorList>
            <person name="Xu P."/>
            <person name="Alves J.M."/>
            <person name="Kitten T."/>
            <person name="Brown A."/>
            <person name="Chen Z."/>
            <person name="Ozaki L.S."/>
            <person name="Manque P."/>
            <person name="Ge X."/>
            <person name="Serrano M.G."/>
            <person name="Puiu D."/>
            <person name="Hendricks S."/>
            <person name="Wang Y."/>
            <person name="Chaplin M.D."/>
            <person name="Akan D."/>
            <person name="Paik S."/>
            <person name="Peterson D.L."/>
            <person name="Macrina F.L."/>
            <person name="Buck G.A."/>
        </authorList>
    </citation>
    <scope>NUCLEOTIDE SEQUENCE [LARGE SCALE GENOMIC DNA]</scope>
    <source>
        <strain>SK36</strain>
    </source>
</reference>